<dbReference type="EC" id="2.4.1.-"/>
<dbReference type="EMBL" id="AY533305">
    <property type="protein sequence ID" value="AAS21307.1"/>
    <property type="molecule type" value="mRNA"/>
</dbReference>
<dbReference type="EMBL" id="Z19152">
    <property type="protein sequence ID" value="CAA79538.2"/>
    <property type="molecule type" value="Genomic_DNA"/>
</dbReference>
<dbReference type="PIR" id="S28281">
    <property type="entry name" value="S28281"/>
</dbReference>
<dbReference type="RefSeq" id="NP_499087.2">
    <property type="nucleotide sequence ID" value="NM_066686.8"/>
</dbReference>
<dbReference type="FunCoup" id="Q03562">
    <property type="interactions" value="893"/>
</dbReference>
<dbReference type="STRING" id="6239.B0464.4a.2"/>
<dbReference type="CAZy" id="GT2">
    <property type="family name" value="Glycosyltransferase Family 2"/>
</dbReference>
<dbReference type="PaxDb" id="6239-B0464.4.1"/>
<dbReference type="PeptideAtlas" id="Q03562"/>
<dbReference type="EnsemblMetazoa" id="B0464.4a.1">
    <property type="protein sequence ID" value="B0464.4a.1"/>
    <property type="gene ID" value="WBGene00000268"/>
</dbReference>
<dbReference type="EnsemblMetazoa" id="B0464.4a.2">
    <property type="protein sequence ID" value="B0464.4a.2"/>
    <property type="gene ID" value="WBGene00000268"/>
</dbReference>
<dbReference type="EnsemblMetazoa" id="B0464.4a.3">
    <property type="protein sequence ID" value="B0464.4a.3"/>
    <property type="gene ID" value="WBGene00000268"/>
</dbReference>
<dbReference type="GeneID" id="176332"/>
<dbReference type="KEGG" id="cel:CELE_B0464.4"/>
<dbReference type="UCSC" id="B0464.4.1">
    <property type="organism name" value="c. elegans"/>
</dbReference>
<dbReference type="AGR" id="WB:WBGene00000268"/>
<dbReference type="CTD" id="176332"/>
<dbReference type="WormBase" id="B0464.4a">
    <property type="protein sequence ID" value="CE33592"/>
    <property type="gene ID" value="WBGene00000268"/>
    <property type="gene designation" value="bre-3"/>
</dbReference>
<dbReference type="eggNOG" id="ENOG502QTGI">
    <property type="taxonomic scope" value="Eukaryota"/>
</dbReference>
<dbReference type="GeneTree" id="ENSGT00520000061918"/>
<dbReference type="HOGENOM" id="CLU_044554_0_0_1"/>
<dbReference type="InParanoid" id="Q03562"/>
<dbReference type="OMA" id="CIENIAV"/>
<dbReference type="OrthoDB" id="3971593at2759"/>
<dbReference type="PhylomeDB" id="Q03562"/>
<dbReference type="UniPathway" id="UPA00378"/>
<dbReference type="PRO" id="PR:Q03562"/>
<dbReference type="Proteomes" id="UP000001940">
    <property type="component" value="Chromosome III"/>
</dbReference>
<dbReference type="Bgee" id="WBGene00000268">
    <property type="expression patterns" value="Expressed in adult organism and 4 other cell types or tissues"/>
</dbReference>
<dbReference type="GO" id="GO:0005737">
    <property type="term" value="C:cytoplasm"/>
    <property type="evidence" value="ECO:0000314"/>
    <property type="project" value="UniProtKB"/>
</dbReference>
<dbReference type="GO" id="GO:0016020">
    <property type="term" value="C:membrane"/>
    <property type="evidence" value="ECO:0007669"/>
    <property type="project" value="GOC"/>
</dbReference>
<dbReference type="GO" id="GO:0019187">
    <property type="term" value="F:beta-1,4-mannosyltransferase activity"/>
    <property type="evidence" value="ECO:0000318"/>
    <property type="project" value="GO_Central"/>
</dbReference>
<dbReference type="GO" id="GO:0016051">
    <property type="term" value="P:carbohydrate biosynthetic process"/>
    <property type="evidence" value="ECO:0000315"/>
    <property type="project" value="UniProtKB"/>
</dbReference>
<dbReference type="GO" id="GO:0006688">
    <property type="term" value="P:glycosphingolipid biosynthetic process"/>
    <property type="evidence" value="ECO:0000250"/>
    <property type="project" value="UniProtKB"/>
</dbReference>
<dbReference type="GO" id="GO:0006486">
    <property type="term" value="P:protein glycosylation"/>
    <property type="evidence" value="ECO:0007669"/>
    <property type="project" value="UniProtKB-UniPathway"/>
</dbReference>
<dbReference type="GO" id="GO:0009636">
    <property type="term" value="P:response to toxic substance"/>
    <property type="evidence" value="ECO:0000315"/>
    <property type="project" value="UniProtKB"/>
</dbReference>
<dbReference type="FunFam" id="3.90.550.10:FF:000175">
    <property type="entry name" value="Beta-1,4-mannosyltransferase bre-3"/>
    <property type="match status" value="1"/>
</dbReference>
<dbReference type="Gene3D" id="3.90.550.10">
    <property type="entry name" value="Spore Coat Polysaccharide Biosynthesis Protein SpsA, Chain A"/>
    <property type="match status" value="1"/>
</dbReference>
<dbReference type="InterPro" id="IPR027389">
    <property type="entry name" value="B_mannosylTrfase_Bre-3/Egh"/>
</dbReference>
<dbReference type="InterPro" id="IPR001173">
    <property type="entry name" value="Glyco_trans_2-like"/>
</dbReference>
<dbReference type="InterPro" id="IPR029044">
    <property type="entry name" value="Nucleotide-diphossugar_trans"/>
</dbReference>
<dbReference type="PANTHER" id="PTHR16779">
    <property type="entry name" value="BETA-1,4-MANNOSYLTRANSFERASE EGH"/>
    <property type="match status" value="1"/>
</dbReference>
<dbReference type="PANTHER" id="PTHR16779:SF1">
    <property type="entry name" value="BETA-1,4-MANNOSYLTRANSFERASE EGH"/>
    <property type="match status" value="1"/>
</dbReference>
<dbReference type="Pfam" id="PF13632">
    <property type="entry name" value="Glyco_trans_2_3"/>
    <property type="match status" value="1"/>
</dbReference>
<dbReference type="SUPFAM" id="SSF53448">
    <property type="entry name" value="Nucleotide-diphospho-sugar transferases"/>
    <property type="match status" value="1"/>
</dbReference>
<accession>Q03562</accession>
<feature type="chain" id="PRO_0000059273" description="Beta-1,4-mannosyltransferase bre-3">
    <location>
        <begin position="1"/>
        <end position="455"/>
    </location>
</feature>
<name>BRE3_CAEEL</name>
<keyword id="KW-0963">Cytoplasm</keyword>
<keyword id="KW-0328">Glycosyltransferase</keyword>
<keyword id="KW-0978">Insecticide resistance</keyword>
<keyword id="KW-1185">Reference proteome</keyword>
<keyword id="KW-0808">Transferase</keyword>
<reference key="1">
    <citation type="journal article" date="2003" name="J. Biol. Chem.">
        <title>Resistance to a bacterial toxin is mediated by removal of a conserved glycosylation pathway required for toxin-host interactions.</title>
        <authorList>
            <person name="Griffitts J.S."/>
            <person name="Huffman D.L."/>
            <person name="Whitacre J.L."/>
            <person name="Barrows B.D."/>
            <person name="Marroquin L.D."/>
            <person name="Mueller R."/>
            <person name="Brown J.R."/>
            <person name="Hennet T."/>
            <person name="Esko J.D."/>
            <person name="Aroian R.V."/>
        </authorList>
    </citation>
    <scope>NUCLEOTIDE SEQUENCE [MRNA]</scope>
    <scope>FUNCTION</scope>
    <scope>SUBCELLULAR LOCATION</scope>
    <scope>TISSUE SPECIFICITY</scope>
    <scope>DISRUPTION PHENOTYPE</scope>
    <source>
        <strain>Bristol N2</strain>
    </source>
</reference>
<reference key="2">
    <citation type="journal article" date="1994" name="Nature">
        <title>2.2 Mb of contiguous nucleotide sequence from chromosome III of C. elegans.</title>
        <authorList>
            <person name="Wilson R."/>
            <person name="Ainscough R."/>
            <person name="Anderson K."/>
            <person name="Baynes C."/>
            <person name="Berks M."/>
            <person name="Bonfield J."/>
            <person name="Burton J."/>
            <person name="Connell M."/>
            <person name="Copsey T."/>
            <person name="Cooper J."/>
            <person name="Coulson A."/>
            <person name="Craxton M."/>
            <person name="Dear S."/>
            <person name="Du Z."/>
            <person name="Durbin R."/>
            <person name="Favello A."/>
            <person name="Fraser A."/>
            <person name="Fulton L."/>
            <person name="Gardner A."/>
            <person name="Green P."/>
            <person name="Hawkins T."/>
            <person name="Hillier L."/>
            <person name="Jier M."/>
            <person name="Johnston L."/>
            <person name="Jones M."/>
            <person name="Kershaw J."/>
            <person name="Kirsten J."/>
            <person name="Laisster N."/>
            <person name="Latreille P."/>
            <person name="Lightning J."/>
            <person name="Lloyd C."/>
            <person name="Mortimore B."/>
            <person name="O'Callaghan M."/>
            <person name="Parsons J."/>
            <person name="Percy C."/>
            <person name="Rifken L."/>
            <person name="Roopra A."/>
            <person name="Saunders D."/>
            <person name="Shownkeen R."/>
            <person name="Sims M."/>
            <person name="Smaldon N."/>
            <person name="Smith A."/>
            <person name="Smith M."/>
            <person name="Sonnhammer E."/>
            <person name="Staden R."/>
            <person name="Sulston J."/>
            <person name="Thierry-Mieg J."/>
            <person name="Thomas K."/>
            <person name="Vaudin M."/>
            <person name="Vaughan K."/>
            <person name="Waterston R."/>
            <person name="Watson A."/>
            <person name="Weinstock L."/>
            <person name="Wilkinson-Sproat J."/>
            <person name="Wohldman P."/>
        </authorList>
    </citation>
    <scope>NUCLEOTIDE SEQUENCE [LARGE SCALE GENOMIC DNA]</scope>
    <source>
        <strain>Bristol N2</strain>
    </source>
</reference>
<reference key="3">
    <citation type="journal article" date="1998" name="Science">
        <title>Genome sequence of the nematode C. elegans: a platform for investigating biology.</title>
        <authorList>
            <consortium name="The C. elegans sequencing consortium"/>
        </authorList>
    </citation>
    <scope>NUCLEOTIDE SEQUENCE [LARGE SCALE GENOMIC DNA]</scope>
    <source>
        <strain>Bristol N2</strain>
    </source>
</reference>
<reference key="4">
    <citation type="journal article" date="2000" name="Genetics">
        <title>Bacillus thuringiensis (Bt) toxin susceptibility and isolation of resistance mutants in the nematode Caenorhabditis elegans.</title>
        <authorList>
            <person name="Marroquin L.D."/>
            <person name="Elyassnia D."/>
            <person name="Griffitts J.S."/>
            <person name="Feitelson J.S."/>
            <person name="Aroian R.V."/>
        </authorList>
    </citation>
    <scope>IDENTIFICATION</scope>
    <scope>FUNCTION</scope>
    <scope>DISRUPTION PHENOTYPE</scope>
</reference>
<reference key="5">
    <citation type="journal article" date="2010" name="PLoS Pathog.">
        <title>Caenorhabditis elegans N-glycan core beta-galactoside confers sensitivity towards nematotoxic fungal galectin CGL2.</title>
        <authorList>
            <person name="Butschi A."/>
            <person name="Titz A."/>
            <person name="Waelti M.A."/>
            <person name="Olieric V."/>
            <person name="Paschinger K."/>
            <person name="Noebauer K."/>
            <person name="Guo X."/>
            <person name="Seeberger P.H."/>
            <person name="Wilson I.B."/>
            <person name="Aebi M."/>
            <person name="Hengartner M.O."/>
            <person name="Kuenzler M."/>
        </authorList>
    </citation>
    <scope>FUNCTION</scope>
</reference>
<sequence>MNCEVKHALHCAVLVAWIVCFAYFCGVFTEPVEGSVPESPVASYGLIWTVCLYLLRFTALLVLPQCLCNLGGLMMFNAFREKVQLKAAPLLSPFVCFRVVTKGNFPLLVKENIDTNMKTCFEAGMENFIFEVVTDKAINLPPNPRVREVVVPTVYKTKSGAKFKARALQYCLEDDVNILQPTDWIVHLDEETLLTTNAICGILNFCEDGKHQFGQGVITYANGDIVNWLTTLSDSFRVADDMGKLRFQFKLFHKPLFGWKGSYVVTQVEAERDVSYDHGMEGSIAEDCFFSMVAMKHGYSFDFIEGEMHEKSPFTMWDFLQQRKRWLQGILLTVHSSKIAVVHKALLALSLYAWATMPLTSLQVFLCPLFPLPRCLPFDFLLSFVGALNLYMYIFGVVKSFSHKYRNSLLRLAMYLAGALMTIPFNILIENAAVLVGMFGRKDQFYIVNKDIQTV</sequence>
<evidence type="ECO:0000269" key="1">
    <source>
    </source>
</evidence>
<evidence type="ECO:0000269" key="2">
    <source>
    </source>
</evidence>
<evidence type="ECO:0000269" key="3">
    <source>
    </source>
</evidence>
<evidence type="ECO:0000305" key="4"/>
<proteinExistence type="evidence at transcript level"/>
<organism>
    <name type="scientific">Caenorhabditis elegans</name>
    <dbReference type="NCBI Taxonomy" id="6239"/>
    <lineage>
        <taxon>Eukaryota</taxon>
        <taxon>Metazoa</taxon>
        <taxon>Ecdysozoa</taxon>
        <taxon>Nematoda</taxon>
        <taxon>Chromadorea</taxon>
        <taxon>Rhabditida</taxon>
        <taxon>Rhabditina</taxon>
        <taxon>Rhabditomorpha</taxon>
        <taxon>Rhabditoidea</taxon>
        <taxon>Rhabditidae</taxon>
        <taxon>Peloderinae</taxon>
        <taxon>Caenorhabditis</taxon>
    </lineage>
</organism>
<protein>
    <recommendedName>
        <fullName>Beta-1,4-mannosyltransferase bre-3</fullName>
        <ecNumber>2.4.1.-</ecNumber>
    </recommendedName>
    <alternativeName>
        <fullName>Bacillus thuringiensis toxin-resistant protein 3</fullName>
        <shortName>Bt toxin-resistant protein 3</shortName>
    </alternativeName>
</protein>
<comment type="function">
    <text evidence="1 2 3">Glycosyltransferase with a proposed role in glycosphingolipid biosynthesis (PubMed:10924467, PubMed:12944392). Involved in susceptibility to pore-forming crystal toxins in conjunction with bre-1, bre-2, bre-4 and bre-5 (PubMed:10924467, PubMed:12944392). Involved in resistance to the nematotoxic C.cinerea galectin Cgl2 (PubMed:20062796). Has a role in determining brood size (PubMed:10924467, PubMed:12944392).</text>
</comment>
<comment type="pathway">
    <text>Protein modification; protein glycosylation.</text>
</comment>
<comment type="subcellular location">
    <subcellularLocation>
        <location evidence="2">Cytoplasm</location>
    </subcellularLocation>
    <text>In punctate structures throughout the cell.</text>
</comment>
<comment type="tissue specificity">
    <text evidence="2">Endothelial cells.</text>
</comment>
<comment type="disruption phenotype">
    <text evidence="1 2">Worms exhibit resistance to the Cry5B toxin produced by Bacillus thuringiensis. This is thought to be due to mutants having reduced population of glycolipids which are targeted by the Cry5B protein. Mutants also have reduced brood sizes at only 17% of wild-type N2.</text>
</comment>
<comment type="similarity">
    <text evidence="4">Belongs to the glycosyltransferase 2 family.</text>
</comment>
<gene>
    <name type="primary">bre-3</name>
    <name type="ORF">B0464.4</name>
</gene>